<proteinExistence type="inferred from homology"/>
<reference key="1">
    <citation type="submission" date="2007-10" db="EMBL/GenBank/DDBJ databases">
        <title>Complete sequence of chromosome 1 of Burkholderia multivorans ATCC 17616.</title>
        <authorList>
            <person name="Copeland A."/>
            <person name="Lucas S."/>
            <person name="Lapidus A."/>
            <person name="Barry K."/>
            <person name="Glavina del Rio T."/>
            <person name="Dalin E."/>
            <person name="Tice H."/>
            <person name="Pitluck S."/>
            <person name="Chain P."/>
            <person name="Malfatti S."/>
            <person name="Shin M."/>
            <person name="Vergez L."/>
            <person name="Schmutz J."/>
            <person name="Larimer F."/>
            <person name="Land M."/>
            <person name="Hauser L."/>
            <person name="Kyrpides N."/>
            <person name="Kim E."/>
            <person name="Tiedje J."/>
            <person name="Richardson P."/>
        </authorList>
    </citation>
    <scope>NUCLEOTIDE SEQUENCE [LARGE SCALE GENOMIC DNA]</scope>
    <source>
        <strain>ATCC 17616 / 249</strain>
    </source>
</reference>
<reference key="2">
    <citation type="submission" date="2007-04" db="EMBL/GenBank/DDBJ databases">
        <title>Complete genome sequence of Burkholderia multivorans ATCC 17616.</title>
        <authorList>
            <person name="Ohtsubo Y."/>
            <person name="Yamashita A."/>
            <person name="Kurokawa K."/>
            <person name="Takami H."/>
            <person name="Yuhara S."/>
            <person name="Nishiyama E."/>
            <person name="Endo R."/>
            <person name="Miyazaki R."/>
            <person name="Ono A."/>
            <person name="Yano K."/>
            <person name="Ito M."/>
            <person name="Sota M."/>
            <person name="Yuji N."/>
            <person name="Hattori M."/>
            <person name="Tsuda M."/>
        </authorList>
    </citation>
    <scope>NUCLEOTIDE SEQUENCE [LARGE SCALE GENOMIC DNA]</scope>
    <source>
        <strain>ATCC 17616 / 249</strain>
    </source>
</reference>
<dbReference type="EMBL" id="CP000868">
    <property type="protein sequence ID" value="ABX15442.1"/>
    <property type="molecule type" value="Genomic_DNA"/>
</dbReference>
<dbReference type="EMBL" id="AP009385">
    <property type="protein sequence ID" value="BAG43415.1"/>
    <property type="molecule type" value="Genomic_DNA"/>
</dbReference>
<dbReference type="RefSeq" id="WP_012213472.1">
    <property type="nucleotide sequence ID" value="NC_010084.1"/>
</dbReference>
<dbReference type="SMR" id="A9ABD4"/>
<dbReference type="STRING" id="395019.BMULJ_01486"/>
<dbReference type="GeneID" id="89569941"/>
<dbReference type="KEGG" id="bmj:BMULJ_01486"/>
<dbReference type="KEGG" id="bmu:Bmul_1754"/>
<dbReference type="eggNOG" id="COG0858">
    <property type="taxonomic scope" value="Bacteria"/>
</dbReference>
<dbReference type="HOGENOM" id="CLU_089475_5_1_4"/>
<dbReference type="Proteomes" id="UP000008815">
    <property type="component" value="Chromosome 1"/>
</dbReference>
<dbReference type="GO" id="GO:0005829">
    <property type="term" value="C:cytosol"/>
    <property type="evidence" value="ECO:0007669"/>
    <property type="project" value="TreeGrafter"/>
</dbReference>
<dbReference type="GO" id="GO:0043024">
    <property type="term" value="F:ribosomal small subunit binding"/>
    <property type="evidence" value="ECO:0007669"/>
    <property type="project" value="TreeGrafter"/>
</dbReference>
<dbReference type="GO" id="GO:0030490">
    <property type="term" value="P:maturation of SSU-rRNA"/>
    <property type="evidence" value="ECO:0007669"/>
    <property type="project" value="UniProtKB-UniRule"/>
</dbReference>
<dbReference type="Gene3D" id="3.30.300.20">
    <property type="match status" value="1"/>
</dbReference>
<dbReference type="HAMAP" id="MF_00003">
    <property type="entry name" value="RbfA"/>
    <property type="match status" value="1"/>
</dbReference>
<dbReference type="InterPro" id="IPR015946">
    <property type="entry name" value="KH_dom-like_a/b"/>
</dbReference>
<dbReference type="InterPro" id="IPR000238">
    <property type="entry name" value="RbfA"/>
</dbReference>
<dbReference type="InterPro" id="IPR023799">
    <property type="entry name" value="RbfA_dom_sf"/>
</dbReference>
<dbReference type="NCBIfam" id="TIGR00082">
    <property type="entry name" value="rbfA"/>
    <property type="match status" value="1"/>
</dbReference>
<dbReference type="PANTHER" id="PTHR33515">
    <property type="entry name" value="RIBOSOME-BINDING FACTOR A, CHLOROPLASTIC-RELATED"/>
    <property type="match status" value="1"/>
</dbReference>
<dbReference type="PANTHER" id="PTHR33515:SF1">
    <property type="entry name" value="RIBOSOME-BINDING FACTOR A, CHLOROPLASTIC-RELATED"/>
    <property type="match status" value="1"/>
</dbReference>
<dbReference type="Pfam" id="PF02033">
    <property type="entry name" value="RBFA"/>
    <property type="match status" value="1"/>
</dbReference>
<dbReference type="SUPFAM" id="SSF89919">
    <property type="entry name" value="Ribosome-binding factor A, RbfA"/>
    <property type="match status" value="1"/>
</dbReference>
<gene>
    <name evidence="1" type="primary">rbfA</name>
    <name type="ordered locus">Bmul_1754</name>
    <name type="ordered locus">BMULJ_01486</name>
</gene>
<comment type="function">
    <text evidence="1">One of several proteins that assist in the late maturation steps of the functional core of the 30S ribosomal subunit. Associates with free 30S ribosomal subunits (but not with 30S subunits that are part of 70S ribosomes or polysomes). Required for efficient processing of 16S rRNA. May interact with the 5'-terminal helix region of 16S rRNA.</text>
</comment>
<comment type="subunit">
    <text evidence="1">Monomer. Binds 30S ribosomal subunits, but not 50S ribosomal subunits or 70S ribosomes.</text>
</comment>
<comment type="subcellular location">
    <subcellularLocation>
        <location evidence="1">Cytoplasm</location>
    </subcellularLocation>
</comment>
<comment type="similarity">
    <text evidence="1">Belongs to the RbfA family.</text>
</comment>
<evidence type="ECO:0000255" key="1">
    <source>
        <dbReference type="HAMAP-Rule" id="MF_00003"/>
    </source>
</evidence>
<name>RBFA_BURM1</name>
<sequence length="132" mass="14893">MSRKRTSPNRNVQIADQIQRDLSELIMREVKDPRIGIVTIQSVELTPDYAHAKVYFTTLTGDPAATQQALNHASGHLHNLLFKRLHIHTVPTLHFHYDQTIEKAVAMSRLIDEANATRAKDDDEADAPAKDD</sequence>
<organism>
    <name type="scientific">Burkholderia multivorans (strain ATCC 17616 / 249)</name>
    <dbReference type="NCBI Taxonomy" id="395019"/>
    <lineage>
        <taxon>Bacteria</taxon>
        <taxon>Pseudomonadati</taxon>
        <taxon>Pseudomonadota</taxon>
        <taxon>Betaproteobacteria</taxon>
        <taxon>Burkholderiales</taxon>
        <taxon>Burkholderiaceae</taxon>
        <taxon>Burkholderia</taxon>
        <taxon>Burkholderia cepacia complex</taxon>
    </lineage>
</organism>
<accession>A9ABD4</accession>
<feature type="chain" id="PRO_1000088865" description="Ribosome-binding factor A">
    <location>
        <begin position="1"/>
        <end position="132"/>
    </location>
</feature>
<protein>
    <recommendedName>
        <fullName evidence="1">Ribosome-binding factor A</fullName>
    </recommendedName>
</protein>
<keyword id="KW-0963">Cytoplasm</keyword>
<keyword id="KW-1185">Reference proteome</keyword>
<keyword id="KW-0690">Ribosome biogenesis</keyword>